<evidence type="ECO:0000255" key="1">
    <source>
        <dbReference type="HAMAP-Rule" id="MF_01361"/>
    </source>
</evidence>
<evidence type="ECO:0000305" key="2"/>
<keyword id="KW-1003">Cell membrane</keyword>
<keyword id="KW-0472">Membrane</keyword>
<keyword id="KW-1185">Reference proteome</keyword>
<keyword id="KW-0812">Transmembrane</keyword>
<keyword id="KW-1133">Transmembrane helix</keyword>
<accession>Q5NXX6</accession>
<protein>
    <recommendedName>
        <fullName evidence="1">UPF0391 membrane protein AZOSEA39630</fullName>
    </recommendedName>
</protein>
<dbReference type="EMBL" id="CR555306">
    <property type="protein sequence ID" value="CAI10088.1"/>
    <property type="status" value="ALT_INIT"/>
    <property type="molecule type" value="Genomic_DNA"/>
</dbReference>
<dbReference type="RefSeq" id="WP_041646615.1">
    <property type="nucleotide sequence ID" value="NC_006513.1"/>
</dbReference>
<dbReference type="SMR" id="Q5NXX6"/>
<dbReference type="STRING" id="76114.ebA6959"/>
<dbReference type="KEGG" id="eba:ebA6959"/>
<dbReference type="eggNOG" id="COG5487">
    <property type="taxonomic scope" value="Bacteria"/>
</dbReference>
<dbReference type="HOGENOM" id="CLU_2178353_0_0_4"/>
<dbReference type="Proteomes" id="UP000006552">
    <property type="component" value="Chromosome"/>
</dbReference>
<dbReference type="GO" id="GO:0005886">
    <property type="term" value="C:plasma membrane"/>
    <property type="evidence" value="ECO:0007669"/>
    <property type="project" value="UniProtKB-SubCell"/>
</dbReference>
<dbReference type="HAMAP" id="MF_01361">
    <property type="entry name" value="UPF0391"/>
    <property type="match status" value="1"/>
</dbReference>
<dbReference type="InterPro" id="IPR009760">
    <property type="entry name" value="DUF1328"/>
</dbReference>
<dbReference type="Pfam" id="PF07043">
    <property type="entry name" value="DUF1328"/>
    <property type="match status" value="1"/>
</dbReference>
<dbReference type="PIRSF" id="PIRSF036466">
    <property type="entry name" value="UCP036466"/>
    <property type="match status" value="1"/>
</dbReference>
<reference key="1">
    <citation type="journal article" date="2005" name="Arch. Microbiol.">
        <title>The genome sequence of an anaerobic aromatic-degrading denitrifying bacterium, strain EbN1.</title>
        <authorList>
            <person name="Rabus R."/>
            <person name="Kube M."/>
            <person name="Heider J."/>
            <person name="Beck A."/>
            <person name="Heitmann K."/>
            <person name="Widdel F."/>
            <person name="Reinhardt R."/>
        </authorList>
    </citation>
    <scope>NUCLEOTIDE SEQUENCE [LARGE SCALE GENOMIC DNA]</scope>
    <source>
        <strain>DSM 19018 / LMG 30748 / EbN1</strain>
    </source>
</reference>
<comment type="subcellular location">
    <subcellularLocation>
        <location evidence="1">Cell membrane</location>
        <topology evidence="1">Multi-pass membrane protein</topology>
    </subcellularLocation>
</comment>
<comment type="similarity">
    <text evidence="1">Belongs to the UPF0391 family.</text>
</comment>
<comment type="sequence caution" evidence="2">
    <conflict type="erroneous initiation">
        <sequence resource="EMBL-CDS" id="CAI10088"/>
    </conflict>
</comment>
<gene>
    <name type="ordered locus">AZOSEA39630</name>
    <name type="ORF">ebA6959</name>
</gene>
<organism>
    <name type="scientific">Aromatoleum aromaticum (strain DSM 19018 / LMG 30748 / EbN1)</name>
    <name type="common">Azoarcus sp. (strain EbN1)</name>
    <dbReference type="NCBI Taxonomy" id="76114"/>
    <lineage>
        <taxon>Bacteria</taxon>
        <taxon>Pseudomonadati</taxon>
        <taxon>Pseudomonadota</taxon>
        <taxon>Betaproteobacteria</taxon>
        <taxon>Rhodocyclales</taxon>
        <taxon>Rhodocyclaceae</taxon>
        <taxon>Aromatoleum</taxon>
    </lineage>
</organism>
<name>Y3963_AROAE</name>
<sequence>MIKWAIIFFVISVIAGLLGFTGVAAGAAGIARVLFYIALAIFLIVLVFGVLLGVLVF</sequence>
<proteinExistence type="inferred from homology"/>
<feature type="chain" id="PRO_0000256710" description="UPF0391 membrane protein AZOSEA39630">
    <location>
        <begin position="1"/>
        <end position="57"/>
    </location>
</feature>
<feature type="transmembrane region" description="Helical" evidence="1">
    <location>
        <begin position="4"/>
        <end position="24"/>
    </location>
</feature>
<feature type="transmembrane region" description="Helical" evidence="1">
    <location>
        <begin position="37"/>
        <end position="57"/>
    </location>
</feature>